<protein>
    <recommendedName>
        <fullName evidence="1">Protein PsbN</fullName>
    </recommendedName>
</protein>
<proteinExistence type="inferred from homology"/>
<organism>
    <name type="scientific">Spinacia oleracea</name>
    <name type="common">Spinach</name>
    <dbReference type="NCBI Taxonomy" id="3562"/>
    <lineage>
        <taxon>Eukaryota</taxon>
        <taxon>Viridiplantae</taxon>
        <taxon>Streptophyta</taxon>
        <taxon>Embryophyta</taxon>
        <taxon>Tracheophyta</taxon>
        <taxon>Spermatophyta</taxon>
        <taxon>Magnoliopsida</taxon>
        <taxon>eudicotyledons</taxon>
        <taxon>Gunneridae</taxon>
        <taxon>Pentapetalae</taxon>
        <taxon>Caryophyllales</taxon>
        <taxon>Chenopodiaceae</taxon>
        <taxon>Chenopodioideae</taxon>
        <taxon>Anserineae</taxon>
        <taxon>Spinacia</taxon>
    </lineage>
</organism>
<keyword id="KW-0150">Chloroplast</keyword>
<keyword id="KW-0472">Membrane</keyword>
<keyword id="KW-0934">Plastid</keyword>
<keyword id="KW-1185">Reference proteome</keyword>
<keyword id="KW-0793">Thylakoid</keyword>
<keyword id="KW-0812">Transmembrane</keyword>
<keyword id="KW-1133">Transmembrane helix</keyword>
<comment type="function">
    <text evidence="1">May play a role in photosystem I and II biogenesis.</text>
</comment>
<comment type="subcellular location">
    <subcellularLocation>
        <location evidence="1">Plastid</location>
        <location evidence="1">Chloroplast thylakoid membrane</location>
        <topology evidence="1">Single-pass membrane protein</topology>
    </subcellularLocation>
</comment>
<comment type="similarity">
    <text evidence="1">Belongs to the PsbN family.</text>
</comment>
<comment type="caution">
    <text evidence="1">Originally thought to be a component of PSII; based on experiments in Synechocystis, N.tabacum and barley, and its absence from PSII in T.elongatus and T.vulcanus, this is probably not true.</text>
</comment>
<reference key="1">
    <citation type="submission" date="2002-07" db="EMBL/GenBank/DDBJ databases">
        <title>Parsing out signal and noise for seed-plant phylogenetic inference.</title>
        <authorList>
            <person name="Graham S.W."/>
            <person name="Rai H.S."/>
            <person name="Ikegami K."/>
            <person name="Reeves P.A."/>
            <person name="Olmstead R.G."/>
        </authorList>
    </citation>
    <scope>NUCLEOTIDE SEQUENCE [GENOMIC DNA]</scope>
</reference>
<reference key="2">
    <citation type="journal article" date="2001" name="Plant Mol. Biol.">
        <title>The plastid chromosome of spinach (Spinacia oleracea): complete nucleotide sequence and gene organization.</title>
        <authorList>
            <person name="Schmitz-Linneweber C."/>
            <person name="Maier R.M."/>
            <person name="Alcaraz J.-P."/>
            <person name="Cottet A."/>
            <person name="Herrmann R.G."/>
            <person name="Mache R."/>
        </authorList>
    </citation>
    <scope>NUCLEOTIDE SEQUENCE [LARGE SCALE GENOMIC DNA]</scope>
    <source>
        <strain>cv. Geant d'hiver</strain>
        <strain>cv. Monatol</strain>
    </source>
</reference>
<sequence>METATLVAIFISGLLVSFTGYALYTAFGQPSQQLRDPFEEHGD</sequence>
<dbReference type="EMBL" id="AF528912">
    <property type="protein sequence ID" value="AAQ09434.1"/>
    <property type="molecule type" value="Genomic_DNA"/>
</dbReference>
<dbReference type="EMBL" id="AJ400848">
    <property type="protein sequence ID" value="CAB88755.1"/>
    <property type="molecule type" value="Genomic_DNA"/>
</dbReference>
<dbReference type="RefSeq" id="NP_054962.1">
    <property type="nucleotide sequence ID" value="NC_002202.1"/>
</dbReference>
<dbReference type="SMR" id="P62116"/>
<dbReference type="FunCoup" id="P62116">
    <property type="interactions" value="41"/>
</dbReference>
<dbReference type="STRING" id="3562.P62116"/>
<dbReference type="GeneID" id="2715619"/>
<dbReference type="KEGG" id="soe:2715619"/>
<dbReference type="InParanoid" id="P62116"/>
<dbReference type="OrthoDB" id="1860403at2759"/>
<dbReference type="Proteomes" id="UP001155700">
    <property type="component" value="Chloroplast Pltd"/>
</dbReference>
<dbReference type="GO" id="GO:0009535">
    <property type="term" value="C:chloroplast thylakoid membrane"/>
    <property type="evidence" value="ECO:0007669"/>
    <property type="project" value="UniProtKB-SubCell"/>
</dbReference>
<dbReference type="GO" id="GO:0015979">
    <property type="term" value="P:photosynthesis"/>
    <property type="evidence" value="ECO:0007669"/>
    <property type="project" value="InterPro"/>
</dbReference>
<dbReference type="HAMAP" id="MF_00293">
    <property type="entry name" value="PSII_PsbN"/>
    <property type="match status" value="1"/>
</dbReference>
<dbReference type="InterPro" id="IPR003398">
    <property type="entry name" value="PSII_PsbN"/>
</dbReference>
<dbReference type="PANTHER" id="PTHR35326">
    <property type="entry name" value="PROTEIN PSBN"/>
    <property type="match status" value="1"/>
</dbReference>
<dbReference type="PANTHER" id="PTHR35326:SF3">
    <property type="entry name" value="PROTEIN PSBN"/>
    <property type="match status" value="1"/>
</dbReference>
<dbReference type="Pfam" id="PF02468">
    <property type="entry name" value="PsbN"/>
    <property type="match status" value="1"/>
</dbReference>
<gene>
    <name evidence="1" type="primary">psbN</name>
</gene>
<accession>P62116</accession>
<accession>P12172</accession>
<accession>Q6EYD9</accession>
<feature type="chain" id="PRO_0000207959" description="Protein PsbN">
    <location>
        <begin position="1"/>
        <end position="43"/>
    </location>
</feature>
<feature type="transmembrane region" description="Helical" evidence="1">
    <location>
        <begin position="7"/>
        <end position="27"/>
    </location>
</feature>
<geneLocation type="chloroplast"/>
<name>PSBN_SPIOL</name>
<evidence type="ECO:0000255" key="1">
    <source>
        <dbReference type="HAMAP-Rule" id="MF_00293"/>
    </source>
</evidence>